<name>APD4_ARATH</name>
<accession>F4ISV9</accession>
<accession>F4IS12</accession>
<accession>O80445</accession>
<accession>Q4PL85</accession>
<accession>Q84RL2</accession>
<keyword id="KW-0025">Alternative splicing</keyword>
<keyword id="KW-0472">Membrane</keyword>
<keyword id="KW-0479">Metal-binding</keyword>
<keyword id="KW-1185">Reference proteome</keyword>
<keyword id="KW-0808">Transferase</keyword>
<keyword id="KW-0812">Transmembrane</keyword>
<keyword id="KW-1133">Transmembrane helix</keyword>
<keyword id="KW-0833">Ubl conjugation pathway</keyword>
<keyword id="KW-0926">Vacuole</keyword>
<keyword id="KW-0862">Zinc</keyword>
<keyword id="KW-0863">Zinc-finger</keyword>
<proteinExistence type="evidence at transcript level"/>
<protein>
    <recommendedName>
        <fullName evidence="7">E3 ubiquitin-protein ligase APD4</fullName>
        <ecNumber evidence="2">2.3.2.27</ecNumber>
    </recommendedName>
    <alternativeName>
        <fullName evidence="6">Protein ABERRANT POLLEN DEVELOPMENT 4</fullName>
    </alternativeName>
</protein>
<gene>
    <name evidence="6" type="primary">APD4</name>
    <name evidence="8" type="ordered locus">At2g38195</name>
    <name evidence="9" type="ORF">F16M14.13</name>
</gene>
<evidence type="ECO:0000250" key="1">
    <source>
        <dbReference type="UniProtKB" id="Q0WS06"/>
    </source>
</evidence>
<evidence type="ECO:0000250" key="2">
    <source>
        <dbReference type="UniProtKB" id="Q6DBH0"/>
    </source>
</evidence>
<evidence type="ECO:0000255" key="3"/>
<evidence type="ECO:0000255" key="4">
    <source>
        <dbReference type="PROSITE-ProRule" id="PRU00175"/>
    </source>
</evidence>
<evidence type="ECO:0000269" key="5">
    <source>
    </source>
</evidence>
<evidence type="ECO:0000303" key="6">
    <source>
    </source>
</evidence>
<evidence type="ECO:0000305" key="7"/>
<evidence type="ECO:0000312" key="8">
    <source>
        <dbReference type="Araport" id="AT2G38195"/>
    </source>
</evidence>
<evidence type="ECO:0000312" key="9">
    <source>
        <dbReference type="EMBL" id="AAO86831.1"/>
    </source>
</evidence>
<reference key="1">
    <citation type="journal article" date="1999" name="Nature">
        <title>Sequence and analysis of chromosome 2 of the plant Arabidopsis thaliana.</title>
        <authorList>
            <person name="Lin X."/>
            <person name="Kaul S."/>
            <person name="Rounsley S.D."/>
            <person name="Shea T.P."/>
            <person name="Benito M.-I."/>
            <person name="Town C.D."/>
            <person name="Fujii C.Y."/>
            <person name="Mason T.M."/>
            <person name="Bowman C.L."/>
            <person name="Barnstead M.E."/>
            <person name="Feldblyum T.V."/>
            <person name="Buell C.R."/>
            <person name="Ketchum K.A."/>
            <person name="Lee J.J."/>
            <person name="Ronning C.M."/>
            <person name="Koo H.L."/>
            <person name="Moffat K.S."/>
            <person name="Cronin L.A."/>
            <person name="Shen M."/>
            <person name="Pai G."/>
            <person name="Van Aken S."/>
            <person name="Umayam L."/>
            <person name="Tallon L.J."/>
            <person name="Gill J.E."/>
            <person name="Adams M.D."/>
            <person name="Carrera A.J."/>
            <person name="Creasy T.H."/>
            <person name="Goodman H.M."/>
            <person name="Somerville C.R."/>
            <person name="Copenhaver G.P."/>
            <person name="Preuss D."/>
            <person name="Nierman W.C."/>
            <person name="White O."/>
            <person name="Eisen J.A."/>
            <person name="Salzberg S.L."/>
            <person name="Fraser C.M."/>
            <person name="Venter J.C."/>
        </authorList>
    </citation>
    <scope>NUCLEOTIDE SEQUENCE [LARGE SCALE GENOMIC DNA]</scope>
    <source>
        <strain>cv. Columbia</strain>
    </source>
</reference>
<reference key="2">
    <citation type="journal article" date="2017" name="Plant J.">
        <title>Araport11: a complete reannotation of the Arabidopsis thaliana reference genome.</title>
        <authorList>
            <person name="Cheng C.Y."/>
            <person name="Krishnakumar V."/>
            <person name="Chan A.P."/>
            <person name="Thibaud-Nissen F."/>
            <person name="Schobel S."/>
            <person name="Town C.D."/>
        </authorList>
    </citation>
    <scope>GENOME REANNOTATION</scope>
    <source>
        <strain>cv. Columbia</strain>
    </source>
</reference>
<reference key="3">
    <citation type="journal article" date="2005" name="Plant Physiol.">
        <title>Analysis of the cDNAs of hypothetical genes on Arabidopsis chromosome 2 reveals numerous transcript variants.</title>
        <authorList>
            <person name="Xiao Y.-L."/>
            <person name="Smith S.R."/>
            <person name="Ishmael N."/>
            <person name="Redman J.C."/>
            <person name="Kumar N."/>
            <person name="Monaghan E.L."/>
            <person name="Ayele M."/>
            <person name="Haas B.J."/>
            <person name="Wu H.C."/>
            <person name="Town C.D."/>
        </authorList>
    </citation>
    <scope>NUCLEOTIDE SEQUENCE [LARGE SCALE MRNA] (ISOFORMS 2 AND 3)</scope>
    <source>
        <strain>cv. Columbia</strain>
    </source>
</reference>
<reference key="4">
    <citation type="journal article" date="2012" name="J. Integr. Plant Biol.">
        <title>Four closely-related RING-type E3 ligases, APD1-4, are involved in pollen mitosis II regulation in Arabidopsis.</title>
        <authorList>
            <person name="Luo G."/>
            <person name="Gu H."/>
            <person name="Liu J."/>
            <person name="Qu L.-J."/>
        </authorList>
    </citation>
    <scope>FUNCTION</scope>
    <scope>DISRUPTION PHENOTYPE</scope>
    <scope>TISSUE SPECIFICITY</scope>
    <scope>DEVELOPMENTAL STAGE</scope>
    <scope>GENE FAMILY</scope>
    <scope>NOMENCLATURE</scope>
    <source>
        <strain>cv. Columbia</strain>
    </source>
</reference>
<dbReference type="EC" id="2.3.2.27" evidence="2"/>
<dbReference type="EMBL" id="AC003028">
    <property type="protein sequence ID" value="AAC27169.1"/>
    <property type="status" value="ALT_SEQ"/>
    <property type="molecule type" value="Genomic_DNA"/>
</dbReference>
<dbReference type="EMBL" id="CP002685">
    <property type="protein sequence ID" value="AEC09507.1"/>
    <property type="molecule type" value="Genomic_DNA"/>
</dbReference>
<dbReference type="EMBL" id="CP002685">
    <property type="protein sequence ID" value="AEC09508.1"/>
    <property type="molecule type" value="Genomic_DNA"/>
</dbReference>
<dbReference type="EMBL" id="AY231403">
    <property type="protein sequence ID" value="AAO86831.1"/>
    <property type="molecule type" value="mRNA"/>
</dbReference>
<dbReference type="EMBL" id="DQ069803">
    <property type="protein sequence ID" value="AAY82262.1"/>
    <property type="molecule type" value="mRNA"/>
</dbReference>
<dbReference type="PIR" id="T01252">
    <property type="entry name" value="T01252"/>
</dbReference>
<dbReference type="RefSeq" id="NP_001118467.1">
    <molecule id="F4ISV9-2"/>
    <property type="nucleotide sequence ID" value="NM_001124995.1"/>
</dbReference>
<dbReference type="RefSeq" id="NP_001118468.1">
    <molecule id="F4ISV9-1"/>
    <property type="nucleotide sequence ID" value="NM_001124996.1"/>
</dbReference>
<dbReference type="SMR" id="F4ISV9"/>
<dbReference type="STRING" id="3702.F4ISV9"/>
<dbReference type="PaxDb" id="3702-AT2G38195.1"/>
<dbReference type="EnsemblPlants" id="AT2G38195.1">
    <molecule id="F4ISV9-1"/>
    <property type="protein sequence ID" value="AT2G38195.1"/>
    <property type="gene ID" value="AT2G38195"/>
</dbReference>
<dbReference type="EnsemblPlants" id="AT2G38195.2">
    <molecule id="F4ISV9-2"/>
    <property type="protein sequence ID" value="AT2G38195.2"/>
    <property type="gene ID" value="AT2G38195"/>
</dbReference>
<dbReference type="GeneID" id="6240532"/>
<dbReference type="Gramene" id="AT2G38195.1">
    <molecule id="F4ISV9-1"/>
    <property type="protein sequence ID" value="AT2G38195.1"/>
    <property type="gene ID" value="AT2G38195"/>
</dbReference>
<dbReference type="Gramene" id="AT2G38195.2">
    <molecule id="F4ISV9-2"/>
    <property type="protein sequence ID" value="AT2G38195.2"/>
    <property type="gene ID" value="AT2G38195"/>
</dbReference>
<dbReference type="KEGG" id="ath:AT2G38195"/>
<dbReference type="Araport" id="AT2G38195"/>
<dbReference type="TAIR" id="AT2G38195">
    <property type="gene designation" value="APD4"/>
</dbReference>
<dbReference type="eggNOG" id="KOG4275">
    <property type="taxonomic scope" value="Eukaryota"/>
</dbReference>
<dbReference type="HOGENOM" id="CLU_040868_1_0_1"/>
<dbReference type="InParanoid" id="F4ISV9"/>
<dbReference type="OMA" id="ECTFNEM"/>
<dbReference type="UniPathway" id="UPA00143"/>
<dbReference type="PRO" id="PR:F4ISV9"/>
<dbReference type="Proteomes" id="UP000006548">
    <property type="component" value="Chromosome 2"/>
</dbReference>
<dbReference type="ExpressionAtlas" id="F4ISV9">
    <property type="expression patterns" value="baseline and differential"/>
</dbReference>
<dbReference type="GO" id="GO:0005768">
    <property type="term" value="C:endosome"/>
    <property type="evidence" value="ECO:0000250"/>
    <property type="project" value="UniProtKB"/>
</dbReference>
<dbReference type="GO" id="GO:0009705">
    <property type="term" value="C:plant-type vacuole membrane"/>
    <property type="evidence" value="ECO:0000250"/>
    <property type="project" value="UniProtKB"/>
</dbReference>
<dbReference type="GO" id="GO:0016740">
    <property type="term" value="F:transferase activity"/>
    <property type="evidence" value="ECO:0007669"/>
    <property type="project" value="UniProtKB-KW"/>
</dbReference>
<dbReference type="GO" id="GO:0008270">
    <property type="term" value="F:zinc ion binding"/>
    <property type="evidence" value="ECO:0007669"/>
    <property type="project" value="UniProtKB-KW"/>
</dbReference>
<dbReference type="GO" id="GO:0000278">
    <property type="term" value="P:mitotic cell cycle"/>
    <property type="evidence" value="ECO:0000315"/>
    <property type="project" value="TAIR"/>
</dbReference>
<dbReference type="GO" id="GO:0009555">
    <property type="term" value="P:pollen development"/>
    <property type="evidence" value="ECO:0000315"/>
    <property type="project" value="UniProtKB"/>
</dbReference>
<dbReference type="GO" id="GO:0016567">
    <property type="term" value="P:protein ubiquitination"/>
    <property type="evidence" value="ECO:0007669"/>
    <property type="project" value="UniProtKB-UniPathway"/>
</dbReference>
<dbReference type="FunFam" id="3.30.40.10:FF:000658">
    <property type="entry name" value="E3 ubiquitin-protein ligase APD2"/>
    <property type="match status" value="1"/>
</dbReference>
<dbReference type="Gene3D" id="3.30.40.10">
    <property type="entry name" value="Zinc/RING finger domain, C3HC4 (zinc finger)"/>
    <property type="match status" value="1"/>
</dbReference>
<dbReference type="InterPro" id="IPR032010">
    <property type="entry name" value="APD1-4_M"/>
</dbReference>
<dbReference type="InterPro" id="IPR032008">
    <property type="entry name" value="APD1-4_N"/>
</dbReference>
<dbReference type="InterPro" id="IPR001841">
    <property type="entry name" value="Znf_RING"/>
</dbReference>
<dbReference type="InterPro" id="IPR013083">
    <property type="entry name" value="Znf_RING/FYVE/PHD"/>
</dbReference>
<dbReference type="PANTHER" id="PTHR46858:SF5">
    <property type="entry name" value="E3 UBIQUITIN-PROTEIN LIGASE APD1-RELATED"/>
    <property type="match status" value="1"/>
</dbReference>
<dbReference type="PANTHER" id="PTHR46858">
    <property type="entry name" value="OS05G0521000 PROTEIN"/>
    <property type="match status" value="1"/>
</dbReference>
<dbReference type="Pfam" id="PF16041">
    <property type="entry name" value="APD1-4_M"/>
    <property type="match status" value="1"/>
</dbReference>
<dbReference type="Pfam" id="PF16040">
    <property type="entry name" value="APD1-4_N"/>
    <property type="match status" value="1"/>
</dbReference>
<dbReference type="Pfam" id="PF13920">
    <property type="entry name" value="zf-C3HC4_3"/>
    <property type="match status" value="1"/>
</dbReference>
<dbReference type="SMART" id="SM00184">
    <property type="entry name" value="RING"/>
    <property type="match status" value="1"/>
</dbReference>
<dbReference type="SUPFAM" id="SSF57850">
    <property type="entry name" value="RING/U-box"/>
    <property type="match status" value="1"/>
</dbReference>
<dbReference type="PROSITE" id="PS50089">
    <property type="entry name" value="ZF_RING_2"/>
    <property type="match status" value="1"/>
</dbReference>
<organism>
    <name type="scientific">Arabidopsis thaliana</name>
    <name type="common">Mouse-ear cress</name>
    <dbReference type="NCBI Taxonomy" id="3702"/>
    <lineage>
        <taxon>Eukaryota</taxon>
        <taxon>Viridiplantae</taxon>
        <taxon>Streptophyta</taxon>
        <taxon>Embryophyta</taxon>
        <taxon>Tracheophyta</taxon>
        <taxon>Spermatophyta</taxon>
        <taxon>Magnoliopsida</taxon>
        <taxon>eudicotyledons</taxon>
        <taxon>Gunneridae</taxon>
        <taxon>Pentapetalae</taxon>
        <taxon>rosids</taxon>
        <taxon>malvids</taxon>
        <taxon>Brassicales</taxon>
        <taxon>Brassicaceae</taxon>
        <taxon>Camelineae</taxon>
        <taxon>Arabidopsis</taxon>
    </lineage>
</organism>
<feature type="chain" id="PRO_0000446987" description="E3 ubiquitin-protein ligase APD4">
    <location>
        <begin position="1"/>
        <end position="399"/>
    </location>
</feature>
<feature type="transmembrane region" description="Helical" evidence="3">
    <location>
        <begin position="42"/>
        <end position="62"/>
    </location>
</feature>
<feature type="transmembrane region" description="Helical" evidence="3">
    <location>
        <begin position="284"/>
        <end position="304"/>
    </location>
</feature>
<feature type="zinc finger region" description="RING-type" evidence="4">
    <location>
        <begin position="348"/>
        <end position="387"/>
    </location>
</feature>
<feature type="splice variant" id="VSP_060127" description="In isoform 3.">
    <original>MGSIRGDLQPLFVMPPPPLDEDCDDIFNSDESSWGLLSLSCFGIIMGLWFFASVCLIFGVYGSETVWLGPNSSILVKPSSIFVKSINAKELDFSKPGLQLYGFNGQSTPSGYFVNWTESRVLSVSQNSYKGWPYYLNRGTHMNISYNILPKGSAVRLVITEGMPFFYRSSLKDIAFRDTAWSWNLIQGSGMIQLDISKSKGYYLTVANLKRKDVE</original>
    <variation>MFVQ</variation>
    <location>
        <begin position="1"/>
        <end position="215"/>
    </location>
</feature>
<feature type="splice variant" id="VSP_060128" description="In isoform 2.">
    <original>GSIRGDLQPLFVMPPPPLDEDCDDIFNSDESSWGLLSLSCFGIIMGLWFFASVCLIFGVYGSETVWLGPNSSILVKPSSIFVKSIN</original>
    <variation>SKENEESEANLYS</variation>
    <location>
        <begin position="2"/>
        <end position="87"/>
    </location>
</feature>
<feature type="sequence conflict" description="In Ref. 3; AAO86831." evidence="7" ref="3">
    <original>V</original>
    <variation>A</variation>
    <location>
        <position position="224"/>
    </location>
</feature>
<sequence length="399" mass="44536">MGSIRGDLQPLFVMPPPPLDEDCDDIFNSDESSWGLLSLSCFGIIMGLWFFASVCLIFGVYGSETVWLGPNSSILVKPSSIFVKSINAKELDFSKPGLQLYGFNGQSTPSGYFVNWTESRVLSVSQNSYKGWPYYLNRGTHMNISYNILPKGSAVRLVITEGMPFFYRSSLKDIAFRDTAWSWNLIQGSGMIQLDISKSKGYYLTVANLKRKDVEVELDIDVKVVLYDTKQSSYNCSFSNGECSFKMNERSPVENYAVVTSPALGQGVSIDDEWYIELSYQPRLIAYGSFTGVLLSFMLVAIHFCNKLKCCGGEGFLSEDDSVRTCLLADKGDNDCCNDVEASNKSLCAICFDAPRDCCFLPCGHCVSCYQCGTKIKRTKGRCPICRKKIMHVKRIYTA</sequence>
<comment type="function">
    <text evidence="5">Involved in pollen mitosis II (PMII) regulation during male gametogenesis.</text>
</comment>
<comment type="catalytic activity">
    <reaction evidence="2">
        <text>S-ubiquitinyl-[E2 ubiquitin-conjugating enzyme]-L-cysteine + [acceptor protein]-L-lysine = [E2 ubiquitin-conjugating enzyme]-L-cysteine + N(6)-ubiquitinyl-[acceptor protein]-L-lysine.</text>
        <dbReference type="EC" id="2.3.2.27"/>
    </reaction>
</comment>
<comment type="pathway">
    <text evidence="2">Protein modification; protein ubiquitination.</text>
</comment>
<comment type="subcellular location">
    <subcellularLocation>
        <location evidence="1">Endomembrane system</location>
        <topology evidence="3">Multi-pass membrane protein</topology>
    </subcellularLocation>
    <subcellularLocation>
        <location evidence="1">Vacuole membrane</location>
        <topology evidence="3">Multi-pass membrane protein</topology>
    </subcellularLocation>
</comment>
<comment type="alternative products">
    <event type="alternative splicing"/>
    <isoform>
        <id>F4ISV9-1</id>
        <name>1</name>
        <sequence type="displayed"/>
    </isoform>
    <isoform>
        <id>F4ISV9-2</id>
        <name>2</name>
        <sequence type="described" ref="VSP_060128"/>
    </isoform>
    <isoform>
        <id>F4ISV9-3</id>
        <name>3</name>
        <sequence type="described" ref="VSP_060127"/>
    </isoform>
</comment>
<comment type="tissue specificity">
    <text evidence="5">Expressed in the shoot apical meristems (SAM), root tips and inflorescences.</text>
</comment>
<comment type="developmental stage">
    <text evidence="5">In young seedlings, expressed in the shoot apical meristem (SAM) and in root tips (PubMed:22897245). In inflorescence, detected in young floral buds, carpels and seeds (PubMed:22897245).</text>
</comment>
<comment type="disruption phenotype">
    <text evidence="5">Plants lacking APD1, APD2, APD3 and APD4 are defective for cell division in male gametogenesis resulting in severe abnormal bicellular-like pollen phenotypes.</text>
</comment>
<comment type="sequence caution" evidence="7">
    <conflict type="erroneous gene model prediction">
        <sequence resource="EMBL-CDS" id="AAC27169"/>
    </conflict>
</comment>